<dbReference type="EC" id="2.7.1.134" evidence="2"/>
<dbReference type="EC" id="2.7.1.159" evidence="2"/>
<dbReference type="EMBL" id="AK038913">
    <property type="protein sequence ID" value="BAC30166.1"/>
    <property type="molecule type" value="mRNA"/>
</dbReference>
<dbReference type="EMBL" id="BC025917">
    <property type="protein sequence ID" value="AAH25917.1"/>
    <property type="molecule type" value="mRNA"/>
</dbReference>
<dbReference type="EMBL" id="BC031182">
    <property type="protein sequence ID" value="AAH31182.1"/>
    <property type="molecule type" value="mRNA"/>
</dbReference>
<dbReference type="EMBL" id="BC056464">
    <property type="protein sequence ID" value="AAH56464.1"/>
    <property type="molecule type" value="mRNA"/>
</dbReference>
<dbReference type="CCDS" id="CCDS26121.1"/>
<dbReference type="RefSeq" id="NP_766172.1">
    <property type="nucleotide sequence ID" value="NM_172584.3"/>
</dbReference>
<dbReference type="SMR" id="Q8BYN3"/>
<dbReference type="FunCoup" id="Q8BYN3">
    <property type="interactions" value="172"/>
</dbReference>
<dbReference type="STRING" id="10090.ENSMUSP00000046027"/>
<dbReference type="GlyGen" id="Q8BYN3">
    <property type="glycosylation" value="2 sites, 1 N-linked glycan (1 site), 1 O-linked glycan (1 site)"/>
</dbReference>
<dbReference type="PhosphoSitePlus" id="Q8BYN3"/>
<dbReference type="PaxDb" id="10090-ENSMUSP00000046027"/>
<dbReference type="PeptideAtlas" id="Q8BYN3"/>
<dbReference type="ProteomicsDB" id="269111"/>
<dbReference type="Pumba" id="Q8BYN3"/>
<dbReference type="Antibodypedia" id="26868">
    <property type="antibodies" value="302 antibodies from 31 providers"/>
</dbReference>
<dbReference type="DNASU" id="217837"/>
<dbReference type="Ensembl" id="ENSMUST00000046518.12">
    <property type="protein sequence ID" value="ENSMUSP00000046027.6"/>
    <property type="gene ID" value="ENSMUSG00000057963.10"/>
</dbReference>
<dbReference type="GeneID" id="217837"/>
<dbReference type="KEGG" id="mmu:217837"/>
<dbReference type="UCSC" id="uc007ouj.1">
    <property type="organism name" value="mouse"/>
</dbReference>
<dbReference type="AGR" id="MGI:2446159"/>
<dbReference type="CTD" id="3705"/>
<dbReference type="MGI" id="MGI:2446159">
    <property type="gene designation" value="Itpk1"/>
</dbReference>
<dbReference type="VEuPathDB" id="HostDB:ENSMUSG00000057963"/>
<dbReference type="eggNOG" id="ENOG502QQS1">
    <property type="taxonomic scope" value="Eukaryota"/>
</dbReference>
<dbReference type="GeneTree" id="ENSGT00390000001278"/>
<dbReference type="HOGENOM" id="CLU_041857_1_1_1"/>
<dbReference type="InParanoid" id="Q8BYN3"/>
<dbReference type="OMA" id="QHLYNRQ"/>
<dbReference type="OrthoDB" id="25308at2759"/>
<dbReference type="PhylomeDB" id="Q8BYN3"/>
<dbReference type="TreeFam" id="TF329288"/>
<dbReference type="Reactome" id="R-MMU-1855167">
    <property type="pathway name" value="Synthesis of pyrophosphates in the cytosol"/>
</dbReference>
<dbReference type="Reactome" id="R-MMU-1855204">
    <property type="pathway name" value="Synthesis of IP3 and IP4 in the cytosol"/>
</dbReference>
<dbReference type="Reactome" id="R-MMU-983231">
    <property type="pathway name" value="Factors involved in megakaryocyte development and platelet production"/>
</dbReference>
<dbReference type="BioGRID-ORCS" id="217837">
    <property type="hits" value="7 hits in 79 CRISPR screens"/>
</dbReference>
<dbReference type="ChiTaRS" id="Itpk1">
    <property type="organism name" value="mouse"/>
</dbReference>
<dbReference type="PRO" id="PR:Q8BYN3"/>
<dbReference type="Proteomes" id="UP000000589">
    <property type="component" value="Chromosome 12"/>
</dbReference>
<dbReference type="RNAct" id="Q8BYN3">
    <property type="molecule type" value="protein"/>
</dbReference>
<dbReference type="Bgee" id="ENSMUSG00000057963">
    <property type="expression patterns" value="Expressed in gastrula and 274 other cell types or tissues"/>
</dbReference>
<dbReference type="ExpressionAtlas" id="Q8BYN3">
    <property type="expression patterns" value="baseline and differential"/>
</dbReference>
<dbReference type="GO" id="GO:0016324">
    <property type="term" value="C:apical plasma membrane"/>
    <property type="evidence" value="ECO:0000314"/>
    <property type="project" value="MGI"/>
</dbReference>
<dbReference type="GO" id="GO:0005524">
    <property type="term" value="F:ATP binding"/>
    <property type="evidence" value="ECO:0007669"/>
    <property type="project" value="UniProtKB-KW"/>
</dbReference>
<dbReference type="GO" id="GO:0016787">
    <property type="term" value="F:hydrolase activity"/>
    <property type="evidence" value="ECO:0007669"/>
    <property type="project" value="UniProtKB-KW"/>
</dbReference>
<dbReference type="GO" id="GO:0000825">
    <property type="term" value="F:inositol-1,3,4,5-tetrakisphosphate 6-kinase activity"/>
    <property type="evidence" value="ECO:0000250"/>
    <property type="project" value="UniProtKB"/>
</dbReference>
<dbReference type="GO" id="GO:0052726">
    <property type="term" value="F:inositol-1,3,4-trisphosphate 5-kinase activity"/>
    <property type="evidence" value="ECO:0007669"/>
    <property type="project" value="InterPro"/>
</dbReference>
<dbReference type="GO" id="GO:0052725">
    <property type="term" value="F:inositol-1,3,4-trisphosphate 6-kinase activity"/>
    <property type="evidence" value="ECO:0007669"/>
    <property type="project" value="InterPro"/>
</dbReference>
<dbReference type="GO" id="GO:0047325">
    <property type="term" value="F:inositol-3,4,5,6-tetrakisphosphate 1-kinase activity"/>
    <property type="evidence" value="ECO:0007669"/>
    <property type="project" value="UniProtKB-EC"/>
</dbReference>
<dbReference type="GO" id="GO:0052835">
    <property type="term" value="F:inositol-3,4,6-trisphosphate 1-kinase activity"/>
    <property type="evidence" value="ECO:0007669"/>
    <property type="project" value="RHEA"/>
</dbReference>
<dbReference type="GO" id="GO:0016853">
    <property type="term" value="F:isomerase activity"/>
    <property type="evidence" value="ECO:0007669"/>
    <property type="project" value="UniProtKB-KW"/>
</dbReference>
<dbReference type="GO" id="GO:0000287">
    <property type="term" value="F:magnesium ion binding"/>
    <property type="evidence" value="ECO:0007669"/>
    <property type="project" value="InterPro"/>
</dbReference>
<dbReference type="GO" id="GO:0032957">
    <property type="term" value="P:inositol trisphosphate metabolic process"/>
    <property type="evidence" value="ECO:0007669"/>
    <property type="project" value="InterPro"/>
</dbReference>
<dbReference type="GO" id="GO:0070266">
    <property type="term" value="P:necroptotic process"/>
    <property type="evidence" value="ECO:0000250"/>
    <property type="project" value="UniProtKB"/>
</dbReference>
<dbReference type="GO" id="GO:0021915">
    <property type="term" value="P:neural tube development"/>
    <property type="evidence" value="ECO:0000315"/>
    <property type="project" value="MGI"/>
</dbReference>
<dbReference type="FunFam" id="3.30.1490.220:FF:000001">
    <property type="entry name" value="Inositol-tetrakisphosphate 1-kinase"/>
    <property type="match status" value="1"/>
</dbReference>
<dbReference type="FunFam" id="3.40.50.11370:FF:000001">
    <property type="entry name" value="Inositol-tetrakisphosphate 1-kinase"/>
    <property type="match status" value="1"/>
</dbReference>
<dbReference type="FunFam" id="3.30.470.20:FF:000047">
    <property type="entry name" value="Inositol-tetrakisphosphate 1-kinase 4"/>
    <property type="match status" value="1"/>
</dbReference>
<dbReference type="Gene3D" id="3.30.1490.220">
    <property type="match status" value="1"/>
</dbReference>
<dbReference type="Gene3D" id="3.40.50.11370">
    <property type="match status" value="2"/>
</dbReference>
<dbReference type="InterPro" id="IPR011761">
    <property type="entry name" value="ATP-grasp"/>
</dbReference>
<dbReference type="InterPro" id="IPR008656">
    <property type="entry name" value="Inositol_tetrakis-P_1-kinase"/>
</dbReference>
<dbReference type="InterPro" id="IPR040464">
    <property type="entry name" value="InsP(3)kin_ATP-grasp"/>
</dbReference>
<dbReference type="InterPro" id="IPR041429">
    <property type="entry name" value="ITPK1_N"/>
</dbReference>
<dbReference type="PANTHER" id="PTHR14217">
    <property type="entry name" value="INOSITOL-TETRAKISPHOSPHATE 1-KINASE"/>
    <property type="match status" value="1"/>
</dbReference>
<dbReference type="PANTHER" id="PTHR14217:SF1">
    <property type="entry name" value="INOSITOL-TETRAKISPHOSPHATE 1-KINASE"/>
    <property type="match status" value="1"/>
</dbReference>
<dbReference type="Pfam" id="PF05770">
    <property type="entry name" value="Ins134_P3_kin"/>
    <property type="match status" value="1"/>
</dbReference>
<dbReference type="Pfam" id="PF17927">
    <property type="entry name" value="Ins134_P3_kin_N"/>
    <property type="match status" value="1"/>
</dbReference>
<dbReference type="SUPFAM" id="SSF56059">
    <property type="entry name" value="Glutathione synthetase ATP-binding domain-like"/>
    <property type="match status" value="1"/>
</dbReference>
<dbReference type="PROSITE" id="PS50975">
    <property type="entry name" value="ATP_GRASP"/>
    <property type="match status" value="1"/>
</dbReference>
<evidence type="ECO:0000250" key="1"/>
<evidence type="ECO:0000250" key="2">
    <source>
        <dbReference type="UniProtKB" id="Q13572"/>
    </source>
</evidence>
<evidence type="ECO:0000255" key="3">
    <source>
        <dbReference type="PROSITE-ProRule" id="PRU00409"/>
    </source>
</evidence>
<evidence type="ECO:0000305" key="4"/>
<evidence type="ECO:0000312" key="5">
    <source>
        <dbReference type="MGI" id="MGI:2446159"/>
    </source>
</evidence>
<reference key="1">
    <citation type="journal article" date="2005" name="Science">
        <title>The transcriptional landscape of the mammalian genome.</title>
        <authorList>
            <person name="Carninci P."/>
            <person name="Kasukawa T."/>
            <person name="Katayama S."/>
            <person name="Gough J."/>
            <person name="Frith M.C."/>
            <person name="Maeda N."/>
            <person name="Oyama R."/>
            <person name="Ravasi T."/>
            <person name="Lenhard B."/>
            <person name="Wells C."/>
            <person name="Kodzius R."/>
            <person name="Shimokawa K."/>
            <person name="Bajic V.B."/>
            <person name="Brenner S.E."/>
            <person name="Batalov S."/>
            <person name="Forrest A.R."/>
            <person name="Zavolan M."/>
            <person name="Davis M.J."/>
            <person name="Wilming L.G."/>
            <person name="Aidinis V."/>
            <person name="Allen J.E."/>
            <person name="Ambesi-Impiombato A."/>
            <person name="Apweiler R."/>
            <person name="Aturaliya R.N."/>
            <person name="Bailey T.L."/>
            <person name="Bansal M."/>
            <person name="Baxter L."/>
            <person name="Beisel K.W."/>
            <person name="Bersano T."/>
            <person name="Bono H."/>
            <person name="Chalk A.M."/>
            <person name="Chiu K.P."/>
            <person name="Choudhary V."/>
            <person name="Christoffels A."/>
            <person name="Clutterbuck D.R."/>
            <person name="Crowe M.L."/>
            <person name="Dalla E."/>
            <person name="Dalrymple B.P."/>
            <person name="de Bono B."/>
            <person name="Della Gatta G."/>
            <person name="di Bernardo D."/>
            <person name="Down T."/>
            <person name="Engstrom P."/>
            <person name="Fagiolini M."/>
            <person name="Faulkner G."/>
            <person name="Fletcher C.F."/>
            <person name="Fukushima T."/>
            <person name="Furuno M."/>
            <person name="Futaki S."/>
            <person name="Gariboldi M."/>
            <person name="Georgii-Hemming P."/>
            <person name="Gingeras T.R."/>
            <person name="Gojobori T."/>
            <person name="Green R.E."/>
            <person name="Gustincich S."/>
            <person name="Harbers M."/>
            <person name="Hayashi Y."/>
            <person name="Hensch T.K."/>
            <person name="Hirokawa N."/>
            <person name="Hill D."/>
            <person name="Huminiecki L."/>
            <person name="Iacono M."/>
            <person name="Ikeo K."/>
            <person name="Iwama A."/>
            <person name="Ishikawa T."/>
            <person name="Jakt M."/>
            <person name="Kanapin A."/>
            <person name="Katoh M."/>
            <person name="Kawasawa Y."/>
            <person name="Kelso J."/>
            <person name="Kitamura H."/>
            <person name="Kitano H."/>
            <person name="Kollias G."/>
            <person name="Krishnan S.P."/>
            <person name="Kruger A."/>
            <person name="Kummerfeld S.K."/>
            <person name="Kurochkin I.V."/>
            <person name="Lareau L.F."/>
            <person name="Lazarevic D."/>
            <person name="Lipovich L."/>
            <person name="Liu J."/>
            <person name="Liuni S."/>
            <person name="McWilliam S."/>
            <person name="Madan Babu M."/>
            <person name="Madera M."/>
            <person name="Marchionni L."/>
            <person name="Matsuda H."/>
            <person name="Matsuzawa S."/>
            <person name="Miki H."/>
            <person name="Mignone F."/>
            <person name="Miyake S."/>
            <person name="Morris K."/>
            <person name="Mottagui-Tabar S."/>
            <person name="Mulder N."/>
            <person name="Nakano N."/>
            <person name="Nakauchi H."/>
            <person name="Ng P."/>
            <person name="Nilsson R."/>
            <person name="Nishiguchi S."/>
            <person name="Nishikawa S."/>
            <person name="Nori F."/>
            <person name="Ohara O."/>
            <person name="Okazaki Y."/>
            <person name="Orlando V."/>
            <person name="Pang K.C."/>
            <person name="Pavan W.J."/>
            <person name="Pavesi G."/>
            <person name="Pesole G."/>
            <person name="Petrovsky N."/>
            <person name="Piazza S."/>
            <person name="Reed J."/>
            <person name="Reid J.F."/>
            <person name="Ring B.Z."/>
            <person name="Ringwald M."/>
            <person name="Rost B."/>
            <person name="Ruan Y."/>
            <person name="Salzberg S.L."/>
            <person name="Sandelin A."/>
            <person name="Schneider C."/>
            <person name="Schoenbach C."/>
            <person name="Sekiguchi K."/>
            <person name="Semple C.A."/>
            <person name="Seno S."/>
            <person name="Sessa L."/>
            <person name="Sheng Y."/>
            <person name="Shibata Y."/>
            <person name="Shimada H."/>
            <person name="Shimada K."/>
            <person name="Silva D."/>
            <person name="Sinclair B."/>
            <person name="Sperling S."/>
            <person name="Stupka E."/>
            <person name="Sugiura K."/>
            <person name="Sultana R."/>
            <person name="Takenaka Y."/>
            <person name="Taki K."/>
            <person name="Tammoja K."/>
            <person name="Tan S.L."/>
            <person name="Tang S."/>
            <person name="Taylor M.S."/>
            <person name="Tegner J."/>
            <person name="Teichmann S.A."/>
            <person name="Ueda H.R."/>
            <person name="van Nimwegen E."/>
            <person name="Verardo R."/>
            <person name="Wei C.L."/>
            <person name="Yagi K."/>
            <person name="Yamanishi H."/>
            <person name="Zabarovsky E."/>
            <person name="Zhu S."/>
            <person name="Zimmer A."/>
            <person name="Hide W."/>
            <person name="Bult C."/>
            <person name="Grimmond S.M."/>
            <person name="Teasdale R.D."/>
            <person name="Liu E.T."/>
            <person name="Brusic V."/>
            <person name="Quackenbush J."/>
            <person name="Wahlestedt C."/>
            <person name="Mattick J.S."/>
            <person name="Hume D.A."/>
            <person name="Kai C."/>
            <person name="Sasaki D."/>
            <person name="Tomaru Y."/>
            <person name="Fukuda S."/>
            <person name="Kanamori-Katayama M."/>
            <person name="Suzuki M."/>
            <person name="Aoki J."/>
            <person name="Arakawa T."/>
            <person name="Iida J."/>
            <person name="Imamura K."/>
            <person name="Itoh M."/>
            <person name="Kato T."/>
            <person name="Kawaji H."/>
            <person name="Kawagashira N."/>
            <person name="Kawashima T."/>
            <person name="Kojima M."/>
            <person name="Kondo S."/>
            <person name="Konno H."/>
            <person name="Nakano K."/>
            <person name="Ninomiya N."/>
            <person name="Nishio T."/>
            <person name="Okada M."/>
            <person name="Plessy C."/>
            <person name="Shibata K."/>
            <person name="Shiraki T."/>
            <person name="Suzuki S."/>
            <person name="Tagami M."/>
            <person name="Waki K."/>
            <person name="Watahiki A."/>
            <person name="Okamura-Oho Y."/>
            <person name="Suzuki H."/>
            <person name="Kawai J."/>
            <person name="Hayashizaki Y."/>
        </authorList>
    </citation>
    <scope>NUCLEOTIDE SEQUENCE [LARGE SCALE MRNA]</scope>
    <source>
        <strain>C57BL/6J</strain>
        <tissue>Hypothalamus</tissue>
    </source>
</reference>
<reference key="2">
    <citation type="journal article" date="2004" name="Genome Res.">
        <title>The status, quality, and expansion of the NIH full-length cDNA project: the Mammalian Gene Collection (MGC).</title>
        <authorList>
            <consortium name="The MGC Project Team"/>
        </authorList>
    </citation>
    <scope>NUCLEOTIDE SEQUENCE [LARGE SCALE MRNA]</scope>
    <source>
        <strain>C57BL/6J</strain>
        <strain>FVB/N</strain>
        <tissue>Brain</tissue>
        <tissue>Colon</tissue>
        <tissue>Mammary tumor</tissue>
    </source>
</reference>
<keyword id="KW-0007">Acetylation</keyword>
<keyword id="KW-0067">ATP-binding</keyword>
<keyword id="KW-0378">Hydrolase</keyword>
<keyword id="KW-0413">Isomerase</keyword>
<keyword id="KW-0418">Kinase</keyword>
<keyword id="KW-0460">Magnesium</keyword>
<keyword id="KW-0479">Metal-binding</keyword>
<keyword id="KW-0547">Nucleotide-binding</keyword>
<keyword id="KW-0597">Phosphoprotein</keyword>
<keyword id="KW-1185">Reference proteome</keyword>
<keyword id="KW-0808">Transferase</keyword>
<gene>
    <name evidence="5" type="primary">Itpk1</name>
</gene>
<feature type="chain" id="PRO_0000220834" description="Inositol-tetrakisphosphate 1-kinase">
    <location>
        <begin position="1"/>
        <end position="419"/>
    </location>
</feature>
<feature type="domain" description="ATP-grasp" evidence="3">
    <location>
        <begin position="117"/>
        <end position="334"/>
    </location>
</feature>
<feature type="binding site" evidence="1">
    <location>
        <position position="18"/>
    </location>
    <ligand>
        <name>1D-myo-inositol 1,3,4-trisphosphate</name>
        <dbReference type="ChEBI" id="CHEBI:58414"/>
    </ligand>
</feature>
<feature type="binding site" evidence="1">
    <location>
        <position position="106"/>
    </location>
    <ligand>
        <name>ATP</name>
        <dbReference type="ChEBI" id="CHEBI:30616"/>
    </ligand>
</feature>
<feature type="binding site" evidence="1">
    <location>
        <position position="157"/>
    </location>
    <ligand>
        <name>ATP</name>
        <dbReference type="ChEBI" id="CHEBI:30616"/>
    </ligand>
</feature>
<feature type="binding site" evidence="1">
    <location>
        <position position="167"/>
    </location>
    <ligand>
        <name>1D-myo-inositol 1,3,4-trisphosphate</name>
        <dbReference type="ChEBI" id="CHEBI:58414"/>
    </ligand>
</feature>
<feature type="binding site" evidence="3">
    <location>
        <begin position="188"/>
        <end position="199"/>
    </location>
    <ligand>
        <name>ATP</name>
        <dbReference type="ChEBI" id="CHEBI:30616"/>
    </ligand>
</feature>
<feature type="binding site" evidence="1">
    <location>
        <position position="199"/>
    </location>
    <ligand>
        <name>1D-myo-inositol 1,3,4-trisphosphate</name>
        <dbReference type="ChEBI" id="CHEBI:58414"/>
    </ligand>
</feature>
<feature type="binding site" evidence="1">
    <location>
        <position position="214"/>
    </location>
    <ligand>
        <name>ATP</name>
        <dbReference type="ChEBI" id="CHEBI:30616"/>
    </ligand>
</feature>
<feature type="binding site" evidence="1">
    <location>
        <position position="232"/>
    </location>
    <ligand>
        <name>ATP</name>
        <dbReference type="ChEBI" id="CHEBI:30616"/>
    </ligand>
</feature>
<feature type="binding site" evidence="1">
    <location>
        <position position="236"/>
    </location>
    <ligand>
        <name>ATP</name>
        <dbReference type="ChEBI" id="CHEBI:30616"/>
    </ligand>
</feature>
<feature type="binding site" evidence="1">
    <location>
        <position position="281"/>
    </location>
    <ligand>
        <name>Mg(2+)</name>
        <dbReference type="ChEBI" id="CHEBI:18420"/>
        <label>1</label>
    </ligand>
</feature>
<feature type="binding site" evidence="1">
    <location>
        <position position="295"/>
    </location>
    <ligand>
        <name>Mg(2+)</name>
        <dbReference type="ChEBI" id="CHEBI:18420"/>
        <label>1</label>
    </ligand>
</feature>
<feature type="binding site" evidence="1">
    <location>
        <position position="295"/>
    </location>
    <ligand>
        <name>Mg(2+)</name>
        <dbReference type="ChEBI" id="CHEBI:18420"/>
        <label>2</label>
    </ligand>
</feature>
<feature type="binding site" evidence="1">
    <location>
        <position position="297"/>
    </location>
    <ligand>
        <name>1D-myo-inositol 1,3,4-trisphosphate</name>
        <dbReference type="ChEBI" id="CHEBI:58414"/>
    </ligand>
</feature>
<feature type="binding site" evidence="1">
    <location>
        <position position="297"/>
    </location>
    <ligand>
        <name>Mg(2+)</name>
        <dbReference type="ChEBI" id="CHEBI:18420"/>
        <label>2</label>
    </ligand>
</feature>
<feature type="modified residue" description="N6-acetyllysine; by EP300 and CREBBP" evidence="2">
    <location>
        <position position="388"/>
    </location>
</feature>
<feature type="modified residue" description="Phosphoserine" evidence="2">
    <location>
        <position position="401"/>
    </location>
</feature>
<feature type="modified residue" description="N6-acetyllysine; by EP300 and CREBBP" evidence="2">
    <location>
        <position position="415"/>
    </location>
</feature>
<accession>Q8BYN3</accession>
<accession>Q8K0J6</accession>
<accession>Q8R0Z0</accession>
<proteinExistence type="evidence at transcript level"/>
<name>ITPK1_MOUSE</name>
<protein>
    <recommendedName>
        <fullName>Inositol-tetrakisphosphate 1-kinase</fullName>
        <ecNumber evidence="2">2.7.1.134</ecNumber>
    </recommendedName>
    <alternativeName>
        <fullName>Inositol 1,3,4-trisphosphate 5/6-kinase</fullName>
        <shortName>Inositol-triphosphate 5/6-kinase</shortName>
        <shortName>Ins(1,3,4)P(3) 5/6-kinase</shortName>
        <ecNumber evidence="2">2.7.1.159</ecNumber>
    </alternativeName>
</protein>
<organism>
    <name type="scientific">Mus musculus</name>
    <name type="common">Mouse</name>
    <dbReference type="NCBI Taxonomy" id="10090"/>
    <lineage>
        <taxon>Eukaryota</taxon>
        <taxon>Metazoa</taxon>
        <taxon>Chordata</taxon>
        <taxon>Craniata</taxon>
        <taxon>Vertebrata</taxon>
        <taxon>Euteleostomi</taxon>
        <taxon>Mammalia</taxon>
        <taxon>Eutheria</taxon>
        <taxon>Euarchontoglires</taxon>
        <taxon>Glires</taxon>
        <taxon>Rodentia</taxon>
        <taxon>Myomorpha</taxon>
        <taxon>Muroidea</taxon>
        <taxon>Muridae</taxon>
        <taxon>Murinae</taxon>
        <taxon>Mus</taxon>
        <taxon>Mus</taxon>
    </lineage>
</organism>
<sequence>MQTFLKGKRVGYWLSEKKVKKLNFQAFAELCRKRGIEVVQLNLSRPIEEQGPLDVIIHKLTDVILEADQNDSQSLELVHRFQEYIDAHPETIVLDPLPAIRTLLDRSKSYELIRKIEAYMKDDRICSPPFMELTSLCGEDTMRLLEQNGLAFPFICKTRVAHGTNSHEMAIVFNQEGLNAIQPPCVVQNFINHNAVLYKVFVVGESYTVVQRPSLKNFSAGTSDRESIFFNSHNVSKPESSSVLTELDKIEGVFERPSDEVIRELSRALRQALGVSLFGIDIIINNQTGQHAVIDVNAFPGYEGVSEFFTDLLNHIATVLQGQSTGGAATEEVAPLRHNRLLAEPAGSLAGERTCSASPGCCGSMKGQDTPWKTETEAGNMGAGASAKLPHQRLGCTTGVSPSFQQHCVASLATKASSQ</sequence>
<comment type="function">
    <text evidence="2">Kinase that can phosphorylate various inositol polyphosphate such as Ins(3,4,5,6)P4 or Ins(1,3,4)P3. Phosphorylates Ins(3,4,5,6)P4 at position 1 to form Ins(1,3,4,5,6)P5. This reaction is thought to have regulatory importance, since Ins(3,4,5,6)P4 is an inhibitor of plasma membrane Ca(2+)-activated Cl(-) channels, while Ins(1,3,4,5,6)P5 is not. Also phosphorylates Ins(1,3,4)P3 on O-5 and O-6 to form Ins(1,3,4,6)P4, an essential molecule in the hexakisphosphate (InsP6) pathway. Also acts as an inositol polyphosphate phosphatase that dephosphorylates Ins(1,3,4,5)P4 and Ins(1,3,4,6)P4 to Ins(1,3,4)P3, and Ins(1,3,4,5,6)P5 to Ins(3,4,5,6)P4. May also act as an isomerase that interconverts the inositol tetrakisphosphate isomers Ins(1,3,4,5)P4 and Ins(1,3,4,6)P4 in the presence of ADP and magnesium. Probably acts as the rate-limiting enzyme of the InsP6 pathway. Modifies TNF-alpha-induced apoptosis by interfering with the activation of TNFRSF1A-associated death domain. Plays an important role in MLKL-mediated necroptosis. Produces highly phosphorylated inositol phosphates such as inositolhexakisphosphate (InsP6) which bind to MLKL mediating the release of an N-terminal auto-inhibitory region leading to its activation. Essential for activated phospho-MLKL to oligomerize and localize to the cell membrane during necroptosis.</text>
</comment>
<comment type="catalytic activity">
    <reaction evidence="2">
        <text>1D-myo-inositol 3,4,5,6-tetrakisphosphate + ATP = 1D-myo-inositol 1,3,4,5,6-pentakisphosphate + ADP + H(+)</text>
        <dbReference type="Rhea" id="RHEA:12452"/>
        <dbReference type="ChEBI" id="CHEBI:15378"/>
        <dbReference type="ChEBI" id="CHEBI:30616"/>
        <dbReference type="ChEBI" id="CHEBI:57539"/>
        <dbReference type="ChEBI" id="CHEBI:57733"/>
        <dbReference type="ChEBI" id="CHEBI:456216"/>
        <dbReference type="EC" id="2.7.1.134"/>
    </reaction>
    <physiologicalReaction direction="left-to-right" evidence="2">
        <dbReference type="Rhea" id="RHEA:12453"/>
    </physiologicalReaction>
    <physiologicalReaction direction="right-to-left" evidence="2">
        <dbReference type="Rhea" id="RHEA:12454"/>
    </physiologicalReaction>
</comment>
<comment type="catalytic activity">
    <reaction evidence="2">
        <text>1D-myo-inositol 1,3,4-trisphosphate + ATP = 1D-myo-inositol 1,3,4,5-tetrakisphosphate + ADP + H(+)</text>
        <dbReference type="Rhea" id="RHEA:13253"/>
        <dbReference type="ChEBI" id="CHEBI:15378"/>
        <dbReference type="ChEBI" id="CHEBI:30616"/>
        <dbReference type="ChEBI" id="CHEBI:57895"/>
        <dbReference type="ChEBI" id="CHEBI:58414"/>
        <dbReference type="ChEBI" id="CHEBI:456216"/>
        <dbReference type="EC" id="2.7.1.159"/>
    </reaction>
    <physiologicalReaction direction="left-to-right" evidence="2">
        <dbReference type="Rhea" id="RHEA:13254"/>
    </physiologicalReaction>
    <physiologicalReaction direction="right-to-left" evidence="2">
        <dbReference type="Rhea" id="RHEA:13255"/>
    </physiologicalReaction>
</comment>
<comment type="catalytic activity">
    <reaction evidence="2">
        <text>1D-myo-inositol 1,3,4-trisphosphate + ATP = 1D-myo-inositol 1,3,4,6-tetrakisphosphate + ADP + H(+)</text>
        <dbReference type="Rhea" id="RHEA:20940"/>
        <dbReference type="ChEBI" id="CHEBI:15378"/>
        <dbReference type="ChEBI" id="CHEBI:30616"/>
        <dbReference type="ChEBI" id="CHEBI:57660"/>
        <dbReference type="ChEBI" id="CHEBI:58414"/>
        <dbReference type="ChEBI" id="CHEBI:456216"/>
        <dbReference type="EC" id="2.7.1.159"/>
    </reaction>
    <physiologicalReaction direction="left-to-right" evidence="2">
        <dbReference type="Rhea" id="RHEA:20941"/>
    </physiologicalReaction>
    <physiologicalReaction direction="right-to-left" evidence="2">
        <dbReference type="Rhea" id="RHEA:20942"/>
    </physiologicalReaction>
</comment>
<comment type="catalytic activity">
    <reaction evidence="2">
        <text>1D-myo-inositol 3,4,6-trisphosphate + ATP = 1D-myo-inositol 1,3,4,6-tetrakisphosphate + ADP + H(+)</text>
        <dbReference type="Rhea" id="RHEA:70287"/>
        <dbReference type="ChEBI" id="CHEBI:15378"/>
        <dbReference type="ChEBI" id="CHEBI:30616"/>
        <dbReference type="ChEBI" id="CHEBI:57660"/>
        <dbReference type="ChEBI" id="CHEBI:189099"/>
        <dbReference type="ChEBI" id="CHEBI:456216"/>
    </reaction>
    <physiologicalReaction direction="left-to-right" evidence="2">
        <dbReference type="Rhea" id="RHEA:70288"/>
    </physiologicalReaction>
    <physiologicalReaction direction="right-to-left" evidence="2">
        <dbReference type="Rhea" id="RHEA:70289"/>
    </physiologicalReaction>
</comment>
<comment type="catalytic activity">
    <reaction evidence="2">
        <text>1D-myo-inositol 1,3,4-trisphosphate + 1D-myo-inositol 1,3,4,5,6-pentakisphosphate = 1D-myo-inositol 3,4,5,6-tetrakisphosphate + 1D-myo-inositol 1,3,4,6-tetrakisphosphate</text>
        <dbReference type="Rhea" id="RHEA:70263"/>
        <dbReference type="ChEBI" id="CHEBI:57539"/>
        <dbReference type="ChEBI" id="CHEBI:57660"/>
        <dbReference type="ChEBI" id="CHEBI:57733"/>
        <dbReference type="ChEBI" id="CHEBI:58414"/>
    </reaction>
    <physiologicalReaction direction="left-to-right" evidence="2">
        <dbReference type="Rhea" id="RHEA:70264"/>
    </physiologicalReaction>
    <physiologicalReaction direction="right-to-left" evidence="2">
        <dbReference type="Rhea" id="RHEA:70265"/>
    </physiologicalReaction>
</comment>
<comment type="catalytic activity">
    <reaction evidence="2">
        <text>1D-myo-inositol 1,3,4-trisphosphate + 1D-myo-inositol 1,3,4,5,6-pentakisphosphate = 1D-myo-inositol 3,4,5,6-tetrakisphosphate + 1D-myo-inositol 1,3,4,5-tetrakisphosphate</text>
        <dbReference type="Rhea" id="RHEA:70271"/>
        <dbReference type="ChEBI" id="CHEBI:57539"/>
        <dbReference type="ChEBI" id="CHEBI:57733"/>
        <dbReference type="ChEBI" id="CHEBI:57895"/>
        <dbReference type="ChEBI" id="CHEBI:58414"/>
    </reaction>
    <physiologicalReaction direction="left-to-right" evidence="2">
        <dbReference type="Rhea" id="RHEA:70272"/>
    </physiologicalReaction>
    <physiologicalReaction direction="right-to-left" evidence="2">
        <dbReference type="Rhea" id="RHEA:70273"/>
    </physiologicalReaction>
</comment>
<comment type="cofactor">
    <cofactor evidence="2">
        <name>Mg(2+)</name>
        <dbReference type="ChEBI" id="CHEBI:18420"/>
    </cofactor>
    <text evidence="2">Binds 2 magnesium ions per subunit.</text>
</comment>
<comment type="subunit">
    <text evidence="2">Monomer. Interacts with GPS1/COPS1.</text>
</comment>
<comment type="PTM">
    <text evidence="2">Acetylation by EP300 and CREBBP destabilizes ITPK1, and down-regulates enzymatic activity. Deacetylated by SIRT1.</text>
</comment>
<comment type="similarity">
    <text evidence="4">Belongs to the ITPK1 family.</text>
</comment>